<organism>
    <name type="scientific">Yersinia pestis bv. Antiqua (strain Nepal516)</name>
    <dbReference type="NCBI Taxonomy" id="377628"/>
    <lineage>
        <taxon>Bacteria</taxon>
        <taxon>Pseudomonadati</taxon>
        <taxon>Pseudomonadota</taxon>
        <taxon>Gammaproteobacteria</taxon>
        <taxon>Enterobacterales</taxon>
        <taxon>Yersiniaceae</taxon>
        <taxon>Yersinia</taxon>
    </lineage>
</organism>
<protein>
    <recommendedName>
        <fullName evidence="1">Heat shock protein HspQ</fullName>
    </recommendedName>
</protein>
<accession>Q1CGL7</accession>
<accession>C4GVL6</accession>
<keyword id="KW-0963">Cytoplasm</keyword>
<keyword id="KW-0346">Stress response</keyword>
<feature type="chain" id="PRO_0000315322" description="Heat shock protein HspQ">
    <location>
        <begin position="1"/>
        <end position="105"/>
    </location>
</feature>
<feature type="region of interest" description="Disordered" evidence="2">
    <location>
        <begin position="80"/>
        <end position="105"/>
    </location>
</feature>
<comment type="function">
    <text evidence="1">Involved in the degradation of certain denaturated proteins, including DnaA, during heat shock stress.</text>
</comment>
<comment type="subcellular location">
    <subcellularLocation>
        <location evidence="1">Cytoplasm</location>
    </subcellularLocation>
</comment>
<comment type="similarity">
    <text evidence="1">Belongs to the HspQ family.</text>
</comment>
<proteinExistence type="inferred from homology"/>
<reference key="1">
    <citation type="journal article" date="2006" name="J. Bacteriol.">
        <title>Complete genome sequence of Yersinia pestis strains Antiqua and Nepal516: evidence of gene reduction in an emerging pathogen.</title>
        <authorList>
            <person name="Chain P.S.G."/>
            <person name="Hu P."/>
            <person name="Malfatti S.A."/>
            <person name="Radnedge L."/>
            <person name="Larimer F."/>
            <person name="Vergez L.M."/>
            <person name="Worsham P."/>
            <person name="Chu M.C."/>
            <person name="Andersen G.L."/>
        </authorList>
    </citation>
    <scope>NUCLEOTIDE SEQUENCE [LARGE SCALE GENOMIC DNA]</scope>
    <source>
        <strain>Nepal516</strain>
    </source>
</reference>
<reference key="2">
    <citation type="submission" date="2009-04" db="EMBL/GenBank/DDBJ databases">
        <title>Yersinia pestis Nepal516A whole genome shotgun sequencing project.</title>
        <authorList>
            <person name="Plunkett G. III"/>
            <person name="Anderson B.D."/>
            <person name="Baumler D.J."/>
            <person name="Burland V."/>
            <person name="Cabot E.L."/>
            <person name="Glasner J.D."/>
            <person name="Mau B."/>
            <person name="Neeno-Eckwall E."/>
            <person name="Perna N.T."/>
            <person name="Munk A.C."/>
            <person name="Tapia R."/>
            <person name="Green L.D."/>
            <person name="Rogers Y.C."/>
            <person name="Detter J.C."/>
            <person name="Bruce D.C."/>
            <person name="Brettin T.S."/>
        </authorList>
    </citation>
    <scope>NUCLEOTIDE SEQUENCE [LARGE SCALE GENOMIC DNA]</scope>
    <source>
        <strain>Nepal516</strain>
    </source>
</reference>
<name>HSPQ_YERPN</name>
<dbReference type="EMBL" id="CP000305">
    <property type="protein sequence ID" value="ABG18863.1"/>
    <property type="molecule type" value="Genomic_DNA"/>
</dbReference>
<dbReference type="EMBL" id="ACNQ01000015">
    <property type="protein sequence ID" value="EEO75972.1"/>
    <property type="molecule type" value="Genomic_DNA"/>
</dbReference>
<dbReference type="RefSeq" id="WP_002213054.1">
    <property type="nucleotide sequence ID" value="NZ_ACNQ01000015.1"/>
</dbReference>
<dbReference type="SMR" id="Q1CGL7"/>
<dbReference type="GeneID" id="57977119"/>
<dbReference type="KEGG" id="ypn:YPN_2535"/>
<dbReference type="HOGENOM" id="CLU_123865_1_0_6"/>
<dbReference type="Proteomes" id="UP000008936">
    <property type="component" value="Chromosome"/>
</dbReference>
<dbReference type="GO" id="GO:0005737">
    <property type="term" value="C:cytoplasm"/>
    <property type="evidence" value="ECO:0007669"/>
    <property type="project" value="UniProtKB-SubCell"/>
</dbReference>
<dbReference type="GO" id="GO:0003677">
    <property type="term" value="F:DNA binding"/>
    <property type="evidence" value="ECO:0007669"/>
    <property type="project" value="InterPro"/>
</dbReference>
<dbReference type="GO" id="GO:0009408">
    <property type="term" value="P:response to heat"/>
    <property type="evidence" value="ECO:0007669"/>
    <property type="project" value="UniProtKB-UniRule"/>
</dbReference>
<dbReference type="Gene3D" id="2.30.30.390">
    <property type="entry name" value="Hemimethylated DNA-binding domain"/>
    <property type="match status" value="1"/>
</dbReference>
<dbReference type="HAMAP" id="MF_01194">
    <property type="entry name" value="HspQ"/>
    <property type="match status" value="1"/>
</dbReference>
<dbReference type="InterPro" id="IPR011722">
    <property type="entry name" value="Hemimethylated_DNA-bd_dom"/>
</dbReference>
<dbReference type="InterPro" id="IPR036623">
    <property type="entry name" value="Hemimethylated_DNA-bd_sf"/>
</dbReference>
<dbReference type="InterPro" id="IPR022866">
    <property type="entry name" value="HspQ"/>
</dbReference>
<dbReference type="NCBIfam" id="NF010729">
    <property type="entry name" value="PRK14129.1"/>
    <property type="match status" value="1"/>
</dbReference>
<dbReference type="NCBIfam" id="TIGR02097">
    <property type="entry name" value="yccV"/>
    <property type="match status" value="1"/>
</dbReference>
<dbReference type="Pfam" id="PF08755">
    <property type="entry name" value="YccV-like"/>
    <property type="match status" value="1"/>
</dbReference>
<dbReference type="SMART" id="SM00992">
    <property type="entry name" value="YccV-like"/>
    <property type="match status" value="1"/>
</dbReference>
<dbReference type="SUPFAM" id="SSF141255">
    <property type="entry name" value="YccV-like"/>
    <property type="match status" value="1"/>
</dbReference>
<evidence type="ECO:0000255" key="1">
    <source>
        <dbReference type="HAMAP-Rule" id="MF_01194"/>
    </source>
</evidence>
<evidence type="ECO:0000256" key="2">
    <source>
        <dbReference type="SAM" id="MobiDB-lite"/>
    </source>
</evidence>
<sequence length="105" mass="11763">MIASKFGIGQQVRHSLHGYLGVVIDIDPEYSLAPPEPDEVANNKTLRSSPWYHVVIEDDDGQPVHTYLAEAQLTYEDVDAHPEQPSLDELAASIRHQLQAPHLRN</sequence>
<gene>
    <name evidence="1" type="primary">hspQ</name>
    <name type="ordered locus">YPN_2535</name>
    <name type="ORF">YP516_2848</name>
</gene>